<keyword id="KW-0002">3D-structure</keyword>
<keyword id="KW-0903">Direct protein sequencing</keyword>
<keyword id="KW-0225">Disease variant</keyword>
<keyword id="KW-1015">Disulfide bond</keyword>
<keyword id="KW-0325">Glycoprotein</keyword>
<keyword id="KW-0326">Glycosidase</keyword>
<keyword id="KW-0378">Hydrolase</keyword>
<keyword id="KW-0458">Lysosome</keyword>
<keyword id="KW-0479">Metal-binding</keyword>
<keyword id="KW-1185">Reference proteome</keyword>
<keyword id="KW-0732">Signal</keyword>
<keyword id="KW-0862">Zinc</keyword>
<keyword id="KW-0865">Zymogen</keyword>
<reference key="1">
    <citation type="journal article" date="1997" name="Eur. J. Biochem.">
        <title>Purification of bovine lysosomal alpha-mannosidase, characterization of its gene and determination of two mutations that cause alpha-mannosidosis.</title>
        <authorList>
            <person name="Tollersrud O.-K."/>
            <person name="Berg T."/>
            <person name="Healy P."/>
            <person name="Evjen G."/>
            <person name="Ramachandran U."/>
            <person name="Nilssen O."/>
        </authorList>
    </citation>
    <scope>NUCLEOTIDE SEQUENCE [GENOMIC DNA / MRNA]</scope>
    <scope>PARTIAL PROTEIN SEQUENCE</scope>
    <scope>VARIANTS AM HIS-221 AND LEU-321</scope>
    <source>
        <tissue>Kidney</tissue>
    </source>
</reference>
<reference key="2">
    <citation type="submission" date="2003-02" db="EMBL/GenBank/DDBJ databases">
        <authorList>
            <person name="Berg T."/>
        </authorList>
    </citation>
    <scope>SEQUENCE REVISION TO 358</scope>
</reference>
<reference key="3">
    <citation type="journal article" date="2009" name="Genome Biol.">
        <title>A whole-genome assembly of the domestic cow, Bos taurus.</title>
        <authorList>
            <person name="Zimin A.V."/>
            <person name="Delcher A.L."/>
            <person name="Florea L."/>
            <person name="Kelley D.R."/>
            <person name="Schatz M.C."/>
            <person name="Puiu D."/>
            <person name="Hanrahan F."/>
            <person name="Pertea G."/>
            <person name="Van Tassell C.P."/>
            <person name="Sonstegard T.S."/>
            <person name="Marcais G."/>
            <person name="Roberts M."/>
            <person name="Subramanian P."/>
            <person name="Yorke J.A."/>
            <person name="Salzberg S.L."/>
        </authorList>
    </citation>
    <scope>NUCLEOTIDE SEQUENCE [LARGE SCALE GENOMIC DNA]</scope>
    <source>
        <strain>Hereford</strain>
    </source>
</reference>
<reference key="4">
    <citation type="journal article" date="2003" name="J. Mol. Biol.">
        <title>The structure of bovine lysosomal alpha-mannosidase suggests a novel mechanism for low-pH activation.</title>
        <authorList>
            <person name="Heikinheimo P."/>
            <person name="Helland R."/>
            <person name="Leiros H.-K.S."/>
            <person name="Leiros I."/>
            <person name="Karlsen S."/>
            <person name="Evjen G."/>
            <person name="Ravelli R."/>
            <person name="Schoehn G."/>
            <person name="Ruigrok R."/>
            <person name="Tollersrud O.-K."/>
            <person name="McSweeney S."/>
            <person name="Hough E."/>
        </authorList>
    </citation>
    <scope>X-RAY CRYSTALLOGRAPHY (2.70 ANGSTROMS) OF 52-999 IN COMPLEX WITH ZINC ION</scope>
    <scope>COFACTOR</scope>
    <scope>ACTIVE SITE</scope>
    <scope>DISULFIDE BONDS</scope>
    <scope>GLYCOSYLATION AT ASN-134; ASN-634; ASN-681 AND ASN-755</scope>
</reference>
<evidence type="ECO:0000255" key="1"/>
<evidence type="ECO:0000255" key="2">
    <source>
        <dbReference type="PROSITE-ProRule" id="PRU00498"/>
    </source>
</evidence>
<evidence type="ECO:0000256" key="3">
    <source>
        <dbReference type="SAM" id="MobiDB-lite"/>
    </source>
</evidence>
<evidence type="ECO:0000269" key="4">
    <source>
    </source>
</evidence>
<evidence type="ECO:0000269" key="5">
    <source>
    </source>
</evidence>
<evidence type="ECO:0000305" key="6"/>
<evidence type="ECO:0007744" key="7">
    <source>
        <dbReference type="PDB" id="1O7D"/>
    </source>
</evidence>
<evidence type="ECO:0007829" key="8">
    <source>
        <dbReference type="PDB" id="1O7D"/>
    </source>
</evidence>
<comment type="function">
    <text>Necessary for the catabolism of N-linked carbohydrates released during glycoprotein turnover.</text>
</comment>
<comment type="catalytic activity">
    <reaction>
        <text>Hydrolysis of terminal, non-reducing alpha-D-mannose residues in alpha-D-mannosides.</text>
        <dbReference type="EC" id="3.2.1.24"/>
    </reaction>
</comment>
<comment type="cofactor">
    <cofactor evidence="4">
        <name>Zn(2+)</name>
        <dbReference type="ChEBI" id="CHEBI:29105"/>
    </cofactor>
    <text evidence="4">Binds 1 zinc ion per subunit.</text>
</comment>
<comment type="subunit">
    <text>Homodimer.</text>
</comment>
<comment type="subcellular location">
    <subcellularLocation>
        <location>Lysosome</location>
    </subcellularLocation>
</comment>
<comment type="PTM">
    <text>Processed into 5 peptides of 35/38 kDa (A), 11/13 kDa (B) and 22 kDa (C), 38 kDa (D) and 13/15 kDa (E). The A, B and C peptides are disulfide-linked into a 67 kDa complex.</text>
</comment>
<comment type="PTM">
    <text>Heavily glycosylated. Some sugar chains are of the high-mannose type.</text>
</comment>
<comment type="disease">
    <text evidence="5">Defects in MAN2B1 are the cause of lysosomal alpha-mannosidosis (AM). AM is a lysosomal storage disease characterized by accumulation of unbranched oligosaccharide chains. The disease manifests itself by head tremor, aggressive tendency, ataxia, failure to thrive, and early death.</text>
</comment>
<comment type="similarity">
    <text evidence="6">Belongs to the glycosyl hydrolase 38 family.</text>
</comment>
<dbReference type="EC" id="3.2.1.24"/>
<dbReference type="EMBL" id="L31373">
    <property type="protein sequence ID" value="AAB67726.2"/>
    <property type="molecule type" value="mRNA"/>
</dbReference>
<dbReference type="EMBL" id="U97694">
    <property type="protein sequence ID" value="AAC48763.1"/>
    <property type="molecule type" value="Genomic_DNA"/>
</dbReference>
<dbReference type="EMBL" id="U97686">
    <property type="protein sequence ID" value="AAC48763.1"/>
    <property type="status" value="JOINED"/>
    <property type="molecule type" value="Genomic_DNA"/>
</dbReference>
<dbReference type="EMBL" id="U97687">
    <property type="protein sequence ID" value="AAC48763.1"/>
    <property type="status" value="JOINED"/>
    <property type="molecule type" value="Genomic_DNA"/>
</dbReference>
<dbReference type="EMBL" id="U97688">
    <property type="protein sequence ID" value="AAC48763.1"/>
    <property type="status" value="JOINED"/>
    <property type="molecule type" value="Genomic_DNA"/>
</dbReference>
<dbReference type="EMBL" id="U97689">
    <property type="protein sequence ID" value="AAC48763.1"/>
    <property type="status" value="JOINED"/>
    <property type="molecule type" value="Genomic_DNA"/>
</dbReference>
<dbReference type="EMBL" id="U97690">
    <property type="protein sequence ID" value="AAC48763.1"/>
    <property type="status" value="JOINED"/>
    <property type="molecule type" value="Genomic_DNA"/>
</dbReference>
<dbReference type="EMBL" id="U97691">
    <property type="protein sequence ID" value="AAC48763.1"/>
    <property type="status" value="JOINED"/>
    <property type="molecule type" value="Genomic_DNA"/>
</dbReference>
<dbReference type="EMBL" id="U97692">
    <property type="protein sequence ID" value="AAC48763.1"/>
    <property type="status" value="JOINED"/>
    <property type="molecule type" value="Genomic_DNA"/>
</dbReference>
<dbReference type="EMBL" id="U97693">
    <property type="protein sequence ID" value="AAC48763.1"/>
    <property type="status" value="JOINED"/>
    <property type="molecule type" value="Genomic_DNA"/>
</dbReference>
<dbReference type="EMBL" id="DAAA02019388">
    <property type="status" value="NOT_ANNOTATED_CDS"/>
    <property type="molecule type" value="Genomic_DNA"/>
</dbReference>
<dbReference type="RefSeq" id="NP_776986.2">
    <property type="nucleotide sequence ID" value="NM_174561.2"/>
</dbReference>
<dbReference type="PDB" id="1O7D">
    <property type="method" value="X-ray"/>
    <property type="resolution" value="2.70 A"/>
    <property type="chains" value="A=51-348, B=349-432, C=433-591, D=592-873, E=874-999"/>
</dbReference>
<dbReference type="PDBsum" id="1O7D"/>
<dbReference type="SMR" id="Q29451"/>
<dbReference type="FunCoup" id="Q29451">
    <property type="interactions" value="997"/>
</dbReference>
<dbReference type="STRING" id="9913.ENSBTAP00000064540"/>
<dbReference type="ChEMBL" id="CHEMBL1932902"/>
<dbReference type="CAZy" id="GH38">
    <property type="family name" value="Glycoside Hydrolase Family 38"/>
</dbReference>
<dbReference type="GlyCosmos" id="Q29451">
    <property type="glycosylation" value="8 sites, No reported glycans"/>
</dbReference>
<dbReference type="GlyGen" id="Q29451">
    <property type="glycosylation" value="8 sites"/>
</dbReference>
<dbReference type="iPTMnet" id="Q29451"/>
<dbReference type="PaxDb" id="9913-ENSBTAP00000008193"/>
<dbReference type="GeneID" id="282272"/>
<dbReference type="KEGG" id="bta:282272"/>
<dbReference type="CTD" id="4125"/>
<dbReference type="VEuPathDB" id="HostDB:ENSBTAG00000006241"/>
<dbReference type="eggNOG" id="KOG1959">
    <property type="taxonomic scope" value="Eukaryota"/>
</dbReference>
<dbReference type="HOGENOM" id="CLU_004690_2_0_1"/>
<dbReference type="InParanoid" id="Q29451"/>
<dbReference type="OMA" id="FIWRPSK"/>
<dbReference type="OrthoDB" id="2016903at2759"/>
<dbReference type="TreeFam" id="TF313840"/>
<dbReference type="BRENDA" id="3.2.1.24">
    <property type="organism ID" value="908"/>
</dbReference>
<dbReference type="Reactome" id="R-BTA-6798695">
    <property type="pathway name" value="Neutrophil degranulation"/>
</dbReference>
<dbReference type="Reactome" id="R-BTA-8853383">
    <property type="pathway name" value="Lysosomal oligosaccharide catabolism"/>
</dbReference>
<dbReference type="EvolutionaryTrace" id="Q29451"/>
<dbReference type="PRO" id="PR:Q29451"/>
<dbReference type="Proteomes" id="UP000009136">
    <property type="component" value="Chromosome 7"/>
</dbReference>
<dbReference type="Bgee" id="ENSBTAG00000006241">
    <property type="expression patterns" value="Expressed in caput epididymis and 105 other cell types or tissues"/>
</dbReference>
<dbReference type="GO" id="GO:0005764">
    <property type="term" value="C:lysosome"/>
    <property type="evidence" value="ECO:0000318"/>
    <property type="project" value="GO_Central"/>
</dbReference>
<dbReference type="GO" id="GO:0004559">
    <property type="term" value="F:alpha-mannosidase activity"/>
    <property type="evidence" value="ECO:0000318"/>
    <property type="project" value="GO_Central"/>
</dbReference>
<dbReference type="GO" id="GO:0030246">
    <property type="term" value="F:carbohydrate binding"/>
    <property type="evidence" value="ECO:0007669"/>
    <property type="project" value="InterPro"/>
</dbReference>
<dbReference type="GO" id="GO:0008270">
    <property type="term" value="F:zinc ion binding"/>
    <property type="evidence" value="ECO:0000314"/>
    <property type="project" value="UniProtKB"/>
</dbReference>
<dbReference type="GO" id="GO:0006013">
    <property type="term" value="P:mannose metabolic process"/>
    <property type="evidence" value="ECO:0007669"/>
    <property type="project" value="InterPro"/>
</dbReference>
<dbReference type="CDD" id="cd10810">
    <property type="entry name" value="GH38N_AMII_LAM_like"/>
    <property type="match status" value="1"/>
</dbReference>
<dbReference type="FunFam" id="1.20.1270.50:FF:000002">
    <property type="entry name" value="Alpha-mannosidase"/>
    <property type="match status" value="1"/>
</dbReference>
<dbReference type="FunFam" id="1.20.1270.50:FF:000003">
    <property type="entry name" value="Alpha-mannosidase"/>
    <property type="match status" value="1"/>
</dbReference>
<dbReference type="FunFam" id="2.60.40.1180:FF:000016">
    <property type="entry name" value="Alpha-mannosidase"/>
    <property type="match status" value="1"/>
</dbReference>
<dbReference type="FunFam" id="2.60.40.1360:FF:000002">
    <property type="entry name" value="Alpha-mannosidase"/>
    <property type="match status" value="1"/>
</dbReference>
<dbReference type="FunFam" id="2.70.98.30:FF:000003">
    <property type="entry name" value="Alpha-mannosidase"/>
    <property type="match status" value="1"/>
</dbReference>
<dbReference type="FunFam" id="3.20.110.10:FF:000001">
    <property type="entry name" value="Alpha-mannosidase"/>
    <property type="match status" value="1"/>
</dbReference>
<dbReference type="Gene3D" id="2.60.40.1360">
    <property type="match status" value="1"/>
</dbReference>
<dbReference type="Gene3D" id="3.20.110.10">
    <property type="entry name" value="Glycoside hydrolase 38, N terminal domain"/>
    <property type="match status" value="1"/>
</dbReference>
<dbReference type="Gene3D" id="1.20.1270.50">
    <property type="entry name" value="Glycoside hydrolase family 38, central domain"/>
    <property type="match status" value="2"/>
</dbReference>
<dbReference type="Gene3D" id="2.60.40.1180">
    <property type="entry name" value="Golgi alpha-mannosidase II"/>
    <property type="match status" value="1"/>
</dbReference>
<dbReference type="Gene3D" id="2.70.98.30">
    <property type="entry name" value="Golgi alpha-mannosidase II, domain 4"/>
    <property type="match status" value="1"/>
</dbReference>
<dbReference type="InterPro" id="IPR011013">
    <property type="entry name" value="Gal_mutarotase_sf_dom"/>
</dbReference>
<dbReference type="InterPro" id="IPR041147">
    <property type="entry name" value="GH38_C"/>
</dbReference>
<dbReference type="InterPro" id="IPR011330">
    <property type="entry name" value="Glyco_hydro/deAcase_b/a-brl"/>
</dbReference>
<dbReference type="InterPro" id="IPR011682">
    <property type="entry name" value="Glyco_hydro_38_C"/>
</dbReference>
<dbReference type="InterPro" id="IPR015341">
    <property type="entry name" value="Glyco_hydro_38_cen"/>
</dbReference>
<dbReference type="InterPro" id="IPR037094">
    <property type="entry name" value="Glyco_hydro_38_cen_sf"/>
</dbReference>
<dbReference type="InterPro" id="IPR000602">
    <property type="entry name" value="Glyco_hydro_38_N"/>
</dbReference>
<dbReference type="InterPro" id="IPR027291">
    <property type="entry name" value="Glyco_hydro_38_N_sf"/>
</dbReference>
<dbReference type="InterPro" id="IPR028995">
    <property type="entry name" value="Glyco_hydro_57/38_cen_sf"/>
</dbReference>
<dbReference type="InterPro" id="IPR013780">
    <property type="entry name" value="Glyco_hydro_b"/>
</dbReference>
<dbReference type="InterPro" id="IPR050843">
    <property type="entry name" value="Glycosyl_Hydrlase_38"/>
</dbReference>
<dbReference type="InterPro" id="IPR048534">
    <property type="entry name" value="Man2a1-like_dom"/>
</dbReference>
<dbReference type="PANTHER" id="PTHR11607">
    <property type="entry name" value="ALPHA-MANNOSIDASE"/>
    <property type="match status" value="1"/>
</dbReference>
<dbReference type="PANTHER" id="PTHR11607:SF3">
    <property type="entry name" value="LYSOSOMAL ALPHA-MANNOSIDASE"/>
    <property type="match status" value="1"/>
</dbReference>
<dbReference type="Pfam" id="PF09261">
    <property type="entry name" value="Alpha-mann_mid"/>
    <property type="match status" value="1"/>
</dbReference>
<dbReference type="Pfam" id="PF17677">
    <property type="entry name" value="Glyco_hydro38C2"/>
    <property type="match status" value="1"/>
</dbReference>
<dbReference type="Pfam" id="PF07748">
    <property type="entry name" value="Glyco_hydro_38C"/>
    <property type="match status" value="1"/>
</dbReference>
<dbReference type="Pfam" id="PF01074">
    <property type="entry name" value="Glyco_hydro_38N"/>
    <property type="match status" value="1"/>
</dbReference>
<dbReference type="Pfam" id="PF21260">
    <property type="entry name" value="Laman-like_dom"/>
    <property type="match status" value="1"/>
</dbReference>
<dbReference type="SMART" id="SM00872">
    <property type="entry name" value="Alpha-mann_mid"/>
    <property type="match status" value="1"/>
</dbReference>
<dbReference type="SUPFAM" id="SSF88688">
    <property type="entry name" value="Families 57/38 glycoside transferase middle domain"/>
    <property type="match status" value="1"/>
</dbReference>
<dbReference type="SUPFAM" id="SSF74650">
    <property type="entry name" value="Galactose mutarotase-like"/>
    <property type="match status" value="1"/>
</dbReference>
<dbReference type="SUPFAM" id="SSF88713">
    <property type="entry name" value="Glycoside hydrolase/deacetylase"/>
    <property type="match status" value="1"/>
</dbReference>
<accession>Q29451</accession>
<accession>F1MMX7</accession>
<accession>O02848</accession>
<accession>O19138</accession>
<proteinExistence type="evidence at protein level"/>
<protein>
    <recommendedName>
        <fullName>Lysosomal alpha-mannosidase</fullName>
        <shortName>Laman</shortName>
        <ecNumber>3.2.1.24</ecNumber>
    </recommendedName>
    <alternativeName>
        <fullName>Lysosomal acid alpha-mannosidase</fullName>
    </alternativeName>
    <alternativeName>
        <fullName>Mannosidase alpha class 2B member 1</fullName>
    </alternativeName>
    <alternativeName>
        <fullName>Mannosidase alpha-B</fullName>
    </alternativeName>
    <component>
        <recommendedName>
            <fullName>Lysosomal alpha-mannosidase A peptide</fullName>
        </recommendedName>
    </component>
    <component>
        <recommendedName>
            <fullName>Lysosomal alpha-mannosidase B peptide</fullName>
        </recommendedName>
    </component>
    <component>
        <recommendedName>
            <fullName>Lysosomal alpha-mannosidase C peptide</fullName>
        </recommendedName>
    </component>
    <component>
        <recommendedName>
            <fullName>Lysosomal alpha-mannosidase D peptide</fullName>
        </recommendedName>
    </component>
    <component>
        <recommendedName>
            <fullName>Lysosomal alpha-mannosidase E peptide</fullName>
        </recommendedName>
    </component>
</protein>
<sequence length="999" mass="112919">MVGDARPSGVRAGGCRGAVGSRTSSRALRPPLPPLSSLFVLFLAAPCAWAAGYKTCPKVKPDMLNVHLVPHTHDDVGWLKTVDQYFYGIYNNIQPAGVQYILDSVISSLLANPTRRFIYVEIAFFSRWWRQQTNATQKIVRELVRQGRLEFANGGWVMNDEATTHYGAIIDQMTLGLRFLEETFGSDGRPRVAWHIDPFGHSREQASLFAQMGFDGFFFGRLDYQDKKVRKKTLQMEQVWRASTSLKPPTADLFTSVLPNMYNPPEGLCWDMLCADKPVVEDTRSPEYNAKELVRYFLKLATDQGKLYRTKHTVMTMGSDFQYENANTWFKNLDKLIQLVNAQQRANGIRVNVLYSTPACYLWELNKANLSWSVKKDDFFPYADGPYMFWTGYFSSRPALKRYERLSYNFLQVCNQLEALAGPAANVGPYGSGDSAPLNEAMAVLQHHDAVSGTSRQHVANDYARQLSEGWRPCEVLMSNALAHLSGLKEDFAFCRKLNISICPLTQTAERFQVIVYNPLGRKVDWMVRLPVSKHVYLVKDPGGKIVPSDVVTIPSSDSQELLFSALVPAVGFSIYSVSQMPNQRPQKSWSRDLVIQNEYLRARFDPNTGLLMELENLEQNLLLPVRQAFYWYNASTGNNLSSQASGAYIFRPNQNKPLFVSHWAQTHLVKASLVQEVHQNFSAWCSQVVRLYPRQRHLELEWTVGPIPVGDGWGKEVISRFDTALATRGLFYTDSNGREILERRRNYRPTWKLNQTEPVAGNYYPVNSRIYITDGNMQLTVLTDRSQGGSSLRDGSLELMVHRRLLKDDARGVGEPLNKEGSGLWVRGRHLVLLDKKETAAARHRLQAEMEVLAPQVVLAQGGGARYRLEKAPRTQFSGLRRELPPSVRLLTLARWGPETLLLRLEHQFAVGEDSGRNLSSPVTLDLTNLFSAFTITNLRETTLAANQLLAYASRLQWTTDTGPTPHPSPSRPVSATITLQPMEIRTFLASVQWEEDG</sequence>
<feature type="signal peptide">
    <location>
        <begin position="1"/>
        <end position="50"/>
    </location>
</feature>
<feature type="chain" id="PRO_0000012060" description="Lysosomal alpha-mannosidase">
    <location>
        <begin position="51"/>
        <end position="999"/>
    </location>
</feature>
<feature type="chain" id="PRO_0000012061" description="Lysosomal alpha-mannosidase A peptide">
    <location>
        <begin position="51"/>
        <end position="347"/>
    </location>
</feature>
<feature type="chain" id="PRO_0000012062" description="Lysosomal alpha-mannosidase B peptide">
    <location>
        <begin position="348"/>
        <end position="431"/>
    </location>
</feature>
<feature type="chain" id="PRO_0000012063" description="Lysosomal alpha-mannosidase C peptide">
    <location>
        <begin position="432"/>
        <end position="590"/>
    </location>
</feature>
<feature type="propeptide" id="PRO_0000012064" evidence="1">
    <location>
        <begin position="591"/>
        <end position="621"/>
    </location>
</feature>
<feature type="chain" id="PRO_0000012065" description="Lysosomal alpha-mannosidase D peptide">
    <location>
        <begin position="622"/>
        <end position="871"/>
    </location>
</feature>
<feature type="chain" id="PRO_0000012066" description="Lysosomal alpha-mannosidase E peptide">
    <location>
        <begin position="872"/>
        <end position="999"/>
    </location>
</feature>
<feature type="region of interest" description="Disordered" evidence="3">
    <location>
        <begin position="1"/>
        <end position="25"/>
    </location>
</feature>
<feature type="active site" description="Nucleophile" evidence="4">
    <location>
        <position position="197"/>
    </location>
</feature>
<feature type="binding site" evidence="4 7">
    <location>
        <position position="73"/>
    </location>
    <ligand>
        <name>Zn(2+)</name>
        <dbReference type="ChEBI" id="CHEBI:29105"/>
    </ligand>
</feature>
<feature type="binding site" evidence="4 7">
    <location>
        <position position="75"/>
    </location>
    <ligand>
        <name>Zn(2+)</name>
        <dbReference type="ChEBI" id="CHEBI:29105"/>
    </ligand>
</feature>
<feature type="binding site" evidence="4 7">
    <location>
        <position position="197"/>
    </location>
    <ligand>
        <name>Zn(2+)</name>
        <dbReference type="ChEBI" id="CHEBI:29105"/>
    </ligand>
</feature>
<feature type="binding site" evidence="4 7">
    <location>
        <position position="448"/>
    </location>
    <ligand>
        <name>Zn(2+)</name>
        <dbReference type="ChEBI" id="CHEBI:29105"/>
    </ligand>
</feature>
<feature type="glycosylation site" description="N-linked (GlcNAc...) asparagine" evidence="4 7">
    <location>
        <position position="134"/>
    </location>
</feature>
<feature type="glycosylation site" description="N-linked (GlcNAc...) asparagine" evidence="2">
    <location>
        <position position="369"/>
    </location>
</feature>
<feature type="glycosylation site" description="N-linked (GlcNAc...) asparagine" evidence="2">
    <location>
        <position position="499"/>
    </location>
</feature>
<feature type="glycosylation site" description="N-linked (GlcNAc...) asparagine" evidence="4 7">
    <location>
        <position position="634"/>
    </location>
</feature>
<feature type="glycosylation site" description="N-linked (GlcNAc...) asparagine" evidence="2">
    <location>
        <position position="640"/>
    </location>
</feature>
<feature type="glycosylation site" description="N-linked (GlcNAc...) asparagine" evidence="4 7">
    <location>
        <position position="681"/>
    </location>
</feature>
<feature type="glycosylation site" description="N-linked (GlcNAc...) asparagine" evidence="4 7">
    <location>
        <position position="755"/>
    </location>
</feature>
<feature type="glycosylation site" description="N-linked (GlcNAc...) asparagine" evidence="2">
    <location>
        <position position="919"/>
    </location>
</feature>
<feature type="disulfide bond" description="Interchain (with C-360)" evidence="4 7">
    <location>
        <position position="56"/>
    </location>
</feature>
<feature type="disulfide bond" evidence="4">
    <location>
        <begin position="269"/>
        <end position="274"/>
    </location>
</feature>
<feature type="disulfide bond" description="Interchain (with C-56)" evidence="4 7">
    <location>
        <position position="360"/>
    </location>
</feature>
<feature type="disulfide bond" description="Interchain (with C-474)" evidence="4 7">
    <location>
        <position position="414"/>
    </location>
</feature>
<feature type="disulfide bond" description="Interchain (with C-414)" evidence="4 7">
    <location>
        <position position="474"/>
    </location>
</feature>
<feature type="disulfide bond" evidence="4">
    <location>
        <begin position="495"/>
        <end position="503"/>
    </location>
</feature>
<feature type="sequence variant" description="In AM; Galloway cattle." evidence="5">
    <original>R</original>
    <variation>H</variation>
    <location>
        <position position="221"/>
    </location>
</feature>
<feature type="sequence variant" description="In AM; Angus cattle." evidence="5">
    <original>F</original>
    <variation>L</variation>
    <location>
        <position position="321"/>
    </location>
</feature>
<feature type="sequence conflict" description="In Ref. 1; AAB67726/AAC48763." evidence="6" ref="1">
    <original>G</original>
    <variation>R</variation>
    <location>
        <position position="176"/>
    </location>
</feature>
<feature type="sequence conflict" description="In Ref. 1; AAC48763." evidence="6" ref="1">
    <location>
        <begin position="512"/>
        <end position="550"/>
    </location>
</feature>
<feature type="strand" evidence="8">
    <location>
        <begin position="61"/>
        <end position="70"/>
    </location>
</feature>
<feature type="strand" evidence="8">
    <location>
        <begin position="76"/>
        <end position="80"/>
    </location>
</feature>
<feature type="helix" evidence="8">
    <location>
        <begin position="82"/>
        <end position="87"/>
    </location>
</feature>
<feature type="turn" evidence="8">
    <location>
        <begin position="91"/>
        <end position="93"/>
    </location>
</feature>
<feature type="helix" evidence="8">
    <location>
        <begin position="98"/>
        <end position="111"/>
    </location>
</feature>
<feature type="strand" evidence="8">
    <location>
        <begin position="117"/>
        <end position="119"/>
    </location>
</feature>
<feature type="helix" evidence="8">
    <location>
        <begin position="122"/>
        <end position="130"/>
    </location>
</feature>
<feature type="helix" evidence="8">
    <location>
        <begin position="134"/>
        <end position="145"/>
    </location>
</feature>
<feature type="strand" evidence="8">
    <location>
        <begin position="148"/>
        <end position="153"/>
    </location>
</feature>
<feature type="strand" evidence="8">
    <location>
        <begin position="155"/>
        <end position="157"/>
    </location>
</feature>
<feature type="strand" evidence="8">
    <location>
        <begin position="161"/>
        <end position="163"/>
    </location>
</feature>
<feature type="helix" evidence="8">
    <location>
        <begin position="166"/>
        <end position="184"/>
    </location>
</feature>
<feature type="helix" evidence="8">
    <location>
        <begin position="185"/>
        <end position="188"/>
    </location>
</feature>
<feature type="strand" evidence="8">
    <location>
        <begin position="191"/>
        <end position="200"/>
    </location>
</feature>
<feature type="helix" evidence="8">
    <location>
        <begin position="203"/>
        <end position="211"/>
    </location>
</feature>
<feature type="strand" evidence="8">
    <location>
        <begin position="216"/>
        <end position="220"/>
    </location>
</feature>
<feature type="helix" evidence="8">
    <location>
        <begin position="224"/>
        <end position="232"/>
    </location>
</feature>
<feature type="strand" evidence="8">
    <location>
        <begin position="236"/>
        <end position="241"/>
    </location>
</feature>
<feature type="strand" evidence="8">
    <location>
        <begin position="244"/>
        <end position="246"/>
    </location>
</feature>
<feature type="turn" evidence="8">
    <location>
        <begin position="248"/>
        <end position="251"/>
    </location>
</feature>
<feature type="strand" evidence="8">
    <location>
        <begin position="252"/>
        <end position="257"/>
    </location>
</feature>
<feature type="helix" evidence="8">
    <location>
        <begin position="290"/>
        <end position="305"/>
    </location>
</feature>
<feature type="strand" evidence="8">
    <location>
        <begin position="308"/>
        <end position="317"/>
    </location>
</feature>
<feature type="helix" evidence="8">
    <location>
        <begin position="326"/>
        <end position="341"/>
    </location>
</feature>
<feature type="strand" evidence="8">
    <location>
        <begin position="351"/>
        <end position="355"/>
    </location>
</feature>
<feature type="helix" evidence="8">
    <location>
        <begin position="358"/>
        <end position="367"/>
    </location>
</feature>
<feature type="helix" evidence="8">
    <location>
        <begin position="392"/>
        <end position="394"/>
    </location>
</feature>
<feature type="helix" evidence="8">
    <location>
        <begin position="398"/>
        <end position="420"/>
    </location>
</feature>
<feature type="helix" evidence="8">
    <location>
        <begin position="436"/>
        <end position="444"/>
    </location>
</feature>
<feature type="turn" evidence="8">
    <location>
        <begin position="448"/>
        <end position="452"/>
    </location>
</feature>
<feature type="helix" evidence="8">
    <location>
        <begin position="457"/>
        <end position="486"/>
    </location>
</feature>
<feature type="helix" evidence="8">
    <location>
        <begin position="498"/>
        <end position="500"/>
    </location>
</feature>
<feature type="helix" evidence="8">
    <location>
        <begin position="504"/>
        <end position="508"/>
    </location>
</feature>
<feature type="strand" evidence="8">
    <location>
        <begin position="510"/>
        <end position="518"/>
    </location>
</feature>
<feature type="strand" evidence="8">
    <location>
        <begin position="520"/>
        <end position="522"/>
    </location>
</feature>
<feature type="strand" evidence="8">
    <location>
        <begin position="524"/>
        <end position="532"/>
    </location>
</feature>
<feature type="strand" evidence="8">
    <location>
        <begin position="537"/>
        <end position="540"/>
    </location>
</feature>
<feature type="strand" evidence="8">
    <location>
        <begin position="542"/>
        <end position="544"/>
    </location>
</feature>
<feature type="strand" evidence="8">
    <location>
        <begin position="550"/>
        <end position="553"/>
    </location>
</feature>
<feature type="turn" evidence="8">
    <location>
        <begin position="555"/>
        <end position="557"/>
    </location>
</feature>
<feature type="strand" evidence="8">
    <location>
        <begin position="560"/>
        <end position="568"/>
    </location>
</feature>
<feature type="strand" evidence="8">
    <location>
        <begin position="572"/>
        <end position="580"/>
    </location>
</feature>
<feature type="strand" evidence="8">
    <location>
        <begin position="595"/>
        <end position="597"/>
    </location>
</feature>
<feature type="strand" evidence="8">
    <location>
        <begin position="599"/>
        <end position="605"/>
    </location>
</feature>
<feature type="turn" evidence="8">
    <location>
        <begin position="607"/>
        <end position="609"/>
    </location>
</feature>
<feature type="strand" evidence="8">
    <location>
        <begin position="611"/>
        <end position="617"/>
    </location>
</feature>
<feature type="strand" evidence="8">
    <location>
        <begin position="623"/>
        <end position="625"/>
    </location>
</feature>
<feature type="strand" evidence="8">
    <location>
        <begin position="627"/>
        <end position="635"/>
    </location>
</feature>
<feature type="strand" evidence="8">
    <location>
        <begin position="653"/>
        <end position="657"/>
    </location>
</feature>
<feature type="strand" evidence="8">
    <location>
        <begin position="659"/>
        <end position="661"/>
    </location>
</feature>
<feature type="strand" evidence="8">
    <location>
        <begin position="666"/>
        <end position="671"/>
    </location>
</feature>
<feature type="strand" evidence="8">
    <location>
        <begin position="676"/>
        <end position="683"/>
    </location>
</feature>
<feature type="strand" evidence="8">
    <location>
        <begin position="686"/>
        <end position="692"/>
    </location>
</feature>
<feature type="strand" evidence="8">
    <location>
        <begin position="697"/>
        <end position="705"/>
    </location>
</feature>
<feature type="strand" evidence="8">
    <location>
        <begin position="716"/>
        <end position="723"/>
    </location>
</feature>
<feature type="strand" evidence="8">
    <location>
        <begin position="731"/>
        <end position="736"/>
    </location>
</feature>
<feature type="strand" evidence="8">
    <location>
        <begin position="739"/>
        <end position="745"/>
    </location>
</feature>
<feature type="strand" evidence="8">
    <location>
        <begin position="750"/>
        <end position="752"/>
    </location>
</feature>
<feature type="helix" evidence="8">
    <location>
        <begin position="761"/>
        <end position="763"/>
    </location>
</feature>
<feature type="strand" evidence="8">
    <location>
        <begin position="765"/>
        <end position="774"/>
    </location>
</feature>
<feature type="strand" evidence="8">
    <location>
        <begin position="776"/>
        <end position="786"/>
    </location>
</feature>
<feature type="strand" evidence="8">
    <location>
        <begin position="788"/>
        <end position="790"/>
    </location>
</feature>
<feature type="strand" evidence="8">
    <location>
        <begin position="797"/>
        <end position="805"/>
    </location>
</feature>
<feature type="strand" evidence="8">
    <location>
        <begin position="811"/>
        <end position="813"/>
    </location>
</feature>
<feature type="helix" evidence="8">
    <location>
        <begin position="822"/>
        <end position="825"/>
    </location>
</feature>
<feature type="strand" evidence="8">
    <location>
        <begin position="826"/>
        <end position="837"/>
    </location>
</feature>
<feature type="helix" evidence="8">
    <location>
        <begin position="838"/>
        <end position="853"/>
    </location>
</feature>
<feature type="strand" evidence="8">
    <location>
        <begin position="857"/>
        <end position="862"/>
    </location>
</feature>
<feature type="strand" evidence="8">
    <location>
        <begin position="880"/>
        <end position="883"/>
    </location>
</feature>
<feature type="strand" evidence="8">
    <location>
        <begin position="890"/>
        <end position="898"/>
    </location>
</feature>
<feature type="strand" evidence="8">
    <location>
        <begin position="901"/>
        <end position="907"/>
    </location>
</feature>
<feature type="turn" evidence="8">
    <location>
        <begin position="912"/>
        <end position="919"/>
    </location>
</feature>
<feature type="strand" evidence="8">
    <location>
        <begin position="924"/>
        <end position="927"/>
    </location>
</feature>
<feature type="strand" evidence="8">
    <location>
        <begin position="929"/>
        <end position="943"/>
    </location>
</feature>
<feature type="strand" evidence="8">
    <location>
        <begin position="947"/>
        <end position="950"/>
    </location>
</feature>
<feature type="helix" evidence="8">
    <location>
        <begin position="951"/>
        <end position="953"/>
    </location>
</feature>
<feature type="strand" evidence="8">
    <location>
        <begin position="978"/>
        <end position="981"/>
    </location>
</feature>
<feature type="strand" evidence="8">
    <location>
        <begin position="986"/>
        <end position="994"/>
    </location>
</feature>
<name>MA2B1_BOVIN</name>
<gene>
    <name type="primary">MAN2B1</name>
    <name type="synonym">MANB</name>
</gene>
<organism>
    <name type="scientific">Bos taurus</name>
    <name type="common">Bovine</name>
    <dbReference type="NCBI Taxonomy" id="9913"/>
    <lineage>
        <taxon>Eukaryota</taxon>
        <taxon>Metazoa</taxon>
        <taxon>Chordata</taxon>
        <taxon>Craniata</taxon>
        <taxon>Vertebrata</taxon>
        <taxon>Euteleostomi</taxon>
        <taxon>Mammalia</taxon>
        <taxon>Eutheria</taxon>
        <taxon>Laurasiatheria</taxon>
        <taxon>Artiodactyla</taxon>
        <taxon>Ruminantia</taxon>
        <taxon>Pecora</taxon>
        <taxon>Bovidae</taxon>
        <taxon>Bovinae</taxon>
        <taxon>Bos</taxon>
    </lineage>
</organism>